<evidence type="ECO:0000250" key="1"/>
<evidence type="ECO:0000255" key="2"/>
<evidence type="ECO:0000255" key="3">
    <source>
        <dbReference type="PROSITE-ProRule" id="PRU00043"/>
    </source>
</evidence>
<evidence type="ECO:0000256" key="4">
    <source>
        <dbReference type="SAM" id="MobiDB-lite"/>
    </source>
</evidence>
<evidence type="ECO:0000305" key="5"/>
<gene>
    <name type="primary">Cdh24</name>
</gene>
<sequence length="781" mass="84104">MWGLVRLLLAWLGGWGCMGRLAAPVPAWAGSRGHSGPTLLRTRRSWVWNQFFVIEEYSGPEPVLIGKLHSDVDRGEGRTKYLLTGEGAGTVFVIDEATGNIHVTKSLDREEKAQYVLLAQAVDRASNRPLEPPSEFIIKVQDINDNPPVFPLGPYHATVPEMSNVGTSVIQVTAHDADDPSYGNSAKLVYTVLDGLPFFSVDPQTGVVRTAIPNMDRETQEEFLVVIQAKDMGGHMGGLSGSTTVTVTLSDVNDNPPKFPQSLYQFSVVETAGPGTLVGRLKAQDPDLGDNALVAYSILNGEGSEVFSISTDSQGQDGLLTVRKPLDFETRRSYTFRVEATNTLIDPAYLRRGPFKDVASVRVTVQDAPEPPAFTQATYHLAVPENKAPGTLVGQISASDLDSPASPIRYSILPHSDPERCFSIEPEDGTIRTAVRLDREARVWHNLTILATELDSSAQSSRVQVAIQTLDENDNAPQLAEPYDIFVCDSAAPGQLIKVIRALDRDEVGNSSQVSLQGPVGPDANFTVRDNRDGSASLLLPSRPAPPRQAPYLIPIELWDWGQPALSSTATVTVSVCRCRPDGSMASCWPEAQLSPTGLSTGALLAIVTCMGTLLALVVLFVALRRQKQEALMVLEEEDVRENIITYDDEGGGEEDTEAFDITALQNPDGAAPPAAGPPVRRDVLPRTRAPRQPRPPGPADVVQLLALRLREADEDPSVPPYDSVQVYGYEGRGSSCGSLSSLGSGSEAGGVPGPAEPLDDWGPLFRTLAELYGAKEPPAP</sequence>
<protein>
    <recommendedName>
        <fullName>Cadherin-24</fullName>
    </recommendedName>
</protein>
<name>CAD24_MOUSE</name>
<feature type="signal peptide" evidence="2">
    <location>
        <begin position="1"/>
        <end position="22"/>
    </location>
</feature>
<feature type="propeptide" id="PRO_0000320100" evidence="2">
    <location>
        <begin position="23"/>
        <end position="44"/>
    </location>
</feature>
<feature type="chain" id="PRO_0000320101" description="Cadherin-24">
    <location>
        <begin position="45"/>
        <end position="781"/>
    </location>
</feature>
<feature type="topological domain" description="Extracellular" evidence="2">
    <location>
        <begin position="45"/>
        <end position="603"/>
    </location>
</feature>
<feature type="transmembrane region" description="Helical" evidence="2">
    <location>
        <begin position="604"/>
        <end position="624"/>
    </location>
</feature>
<feature type="topological domain" description="Cytoplasmic" evidence="2">
    <location>
        <begin position="625"/>
        <end position="781"/>
    </location>
</feature>
<feature type="domain" description="Cadherin 1" evidence="3">
    <location>
        <begin position="46"/>
        <end position="150"/>
    </location>
</feature>
<feature type="domain" description="Cadherin 2" evidence="3">
    <location>
        <begin position="151"/>
        <end position="259"/>
    </location>
</feature>
<feature type="domain" description="Cadherin 3" evidence="3">
    <location>
        <begin position="260"/>
        <end position="374"/>
    </location>
</feature>
<feature type="domain" description="Cadherin 4" evidence="3">
    <location>
        <begin position="375"/>
        <end position="479"/>
    </location>
</feature>
<feature type="domain" description="Cadherin 5" evidence="3">
    <location>
        <begin position="479"/>
        <end position="592"/>
    </location>
</feature>
<feature type="region of interest" description="Disordered" evidence="4">
    <location>
        <begin position="665"/>
        <end position="700"/>
    </location>
</feature>
<feature type="region of interest" description="Disordered" evidence="4">
    <location>
        <begin position="731"/>
        <end position="762"/>
    </location>
</feature>
<feature type="compositionally biased region" description="Low complexity" evidence="4">
    <location>
        <begin position="733"/>
        <end position="746"/>
    </location>
</feature>
<feature type="glycosylation site" description="N-linked (GlcNAc...) asparagine" evidence="2">
    <location>
        <position position="446"/>
    </location>
</feature>
<feature type="glycosylation site" description="N-linked (GlcNAc...) asparagine" evidence="2">
    <location>
        <position position="510"/>
    </location>
</feature>
<feature type="glycosylation site" description="N-linked (GlcNAc...) asparagine" evidence="2">
    <location>
        <position position="525"/>
    </location>
</feature>
<accession>Q6PFX6</accession>
<keyword id="KW-0106">Calcium</keyword>
<keyword id="KW-0130">Cell adhesion</keyword>
<keyword id="KW-1003">Cell membrane</keyword>
<keyword id="KW-0165">Cleavage on pair of basic residues</keyword>
<keyword id="KW-0325">Glycoprotein</keyword>
<keyword id="KW-0472">Membrane</keyword>
<keyword id="KW-0479">Metal-binding</keyword>
<keyword id="KW-1185">Reference proteome</keyword>
<keyword id="KW-0677">Repeat</keyword>
<keyword id="KW-0732">Signal</keyword>
<keyword id="KW-0812">Transmembrane</keyword>
<keyword id="KW-1133">Transmembrane helix</keyword>
<dbReference type="EMBL" id="BC057373">
    <property type="protein sequence ID" value="AAH57373.1"/>
    <property type="molecule type" value="mRNA"/>
</dbReference>
<dbReference type="CCDS" id="CCDS36923.1"/>
<dbReference type="RefSeq" id="NP_955764.1">
    <property type="nucleotide sequence ID" value="NM_199470.3"/>
</dbReference>
<dbReference type="SMR" id="Q6PFX6"/>
<dbReference type="FunCoup" id="Q6PFX6">
    <property type="interactions" value="97"/>
</dbReference>
<dbReference type="STRING" id="10090.ENSMUSP00000066005"/>
<dbReference type="GlyCosmos" id="Q6PFX6">
    <property type="glycosylation" value="3 sites, No reported glycans"/>
</dbReference>
<dbReference type="GlyGen" id="Q6PFX6">
    <property type="glycosylation" value="3 sites, 1 N-linked glycan (1 site)"/>
</dbReference>
<dbReference type="PhosphoSitePlus" id="Q6PFX6"/>
<dbReference type="PaxDb" id="10090-ENSMUSP00000066005"/>
<dbReference type="ProteomicsDB" id="265496"/>
<dbReference type="Antibodypedia" id="22384">
    <property type="antibodies" value="117 antibodies from 22 providers"/>
</dbReference>
<dbReference type="DNASU" id="239096"/>
<dbReference type="Ensembl" id="ENSMUST00000067784.8">
    <property type="protein sequence ID" value="ENSMUSP00000066005.7"/>
    <property type="gene ID" value="ENSMUSG00000059674.8"/>
</dbReference>
<dbReference type="GeneID" id="239096"/>
<dbReference type="KEGG" id="mmu:239096"/>
<dbReference type="UCSC" id="uc011zlc.1">
    <property type="organism name" value="mouse"/>
</dbReference>
<dbReference type="AGR" id="MGI:1928330"/>
<dbReference type="CTD" id="64403"/>
<dbReference type="MGI" id="MGI:1928330">
    <property type="gene designation" value="Cdh24"/>
</dbReference>
<dbReference type="VEuPathDB" id="HostDB:ENSMUSG00000059674"/>
<dbReference type="eggNOG" id="KOG3594">
    <property type="taxonomic scope" value="Eukaryota"/>
</dbReference>
<dbReference type="GeneTree" id="ENSGT00940000159567"/>
<dbReference type="HOGENOM" id="CLU_005284_3_1_1"/>
<dbReference type="InParanoid" id="Q6PFX6"/>
<dbReference type="OMA" id="FETRHSY"/>
<dbReference type="OrthoDB" id="6079678at2759"/>
<dbReference type="PhylomeDB" id="Q6PFX6"/>
<dbReference type="TreeFam" id="TF329887"/>
<dbReference type="Reactome" id="R-MMU-418990">
    <property type="pathway name" value="Adherens junctions interactions"/>
</dbReference>
<dbReference type="BioGRID-ORCS" id="239096">
    <property type="hits" value="1 hit in 79 CRISPR screens"/>
</dbReference>
<dbReference type="PRO" id="PR:Q6PFX6"/>
<dbReference type="Proteomes" id="UP000000589">
    <property type="component" value="Chromosome 14"/>
</dbReference>
<dbReference type="RNAct" id="Q6PFX6">
    <property type="molecule type" value="protein"/>
</dbReference>
<dbReference type="Bgee" id="ENSMUSG00000059674">
    <property type="expression patterns" value="Expressed in thymus and 66 other cell types or tissues"/>
</dbReference>
<dbReference type="ExpressionAtlas" id="Q6PFX6">
    <property type="expression patterns" value="baseline and differential"/>
</dbReference>
<dbReference type="GO" id="GO:0005911">
    <property type="term" value="C:cell-cell junction"/>
    <property type="evidence" value="ECO:0000266"/>
    <property type="project" value="MGI"/>
</dbReference>
<dbReference type="GO" id="GO:0005886">
    <property type="term" value="C:plasma membrane"/>
    <property type="evidence" value="ECO:0007669"/>
    <property type="project" value="UniProtKB-SubCell"/>
</dbReference>
<dbReference type="GO" id="GO:0005509">
    <property type="term" value="F:calcium ion binding"/>
    <property type="evidence" value="ECO:0000266"/>
    <property type="project" value="MGI"/>
</dbReference>
<dbReference type="GO" id="GO:0098609">
    <property type="term" value="P:cell-cell adhesion"/>
    <property type="evidence" value="ECO:0000266"/>
    <property type="project" value="MGI"/>
</dbReference>
<dbReference type="GO" id="GO:0007156">
    <property type="term" value="P:homophilic cell adhesion via plasma membrane adhesion molecules"/>
    <property type="evidence" value="ECO:0007669"/>
    <property type="project" value="InterPro"/>
</dbReference>
<dbReference type="CDD" id="cd11304">
    <property type="entry name" value="Cadherin_repeat"/>
    <property type="match status" value="4"/>
</dbReference>
<dbReference type="FunFam" id="2.60.40.60:FF:000008">
    <property type="entry name" value="Cadherin 24"/>
    <property type="match status" value="1"/>
</dbReference>
<dbReference type="FunFam" id="2.60.40.60:FF:000009">
    <property type="entry name" value="Cadherin 24"/>
    <property type="match status" value="1"/>
</dbReference>
<dbReference type="FunFam" id="2.60.40.60:FF:000012">
    <property type="entry name" value="Cadherin 24"/>
    <property type="match status" value="1"/>
</dbReference>
<dbReference type="FunFam" id="2.60.40.60:FF:000017">
    <property type="entry name" value="Cadherin 24"/>
    <property type="match status" value="1"/>
</dbReference>
<dbReference type="FunFam" id="2.60.40.60:FF:000179">
    <property type="entry name" value="Cadherin 24"/>
    <property type="match status" value="1"/>
</dbReference>
<dbReference type="FunFam" id="4.10.900.10:FF:000010">
    <property type="entry name" value="Cadherin 24"/>
    <property type="match status" value="1"/>
</dbReference>
<dbReference type="Gene3D" id="2.60.40.60">
    <property type="entry name" value="Cadherins"/>
    <property type="match status" value="5"/>
</dbReference>
<dbReference type="Gene3D" id="4.10.900.10">
    <property type="entry name" value="TCF3-CBD (Catenin binding domain)"/>
    <property type="match status" value="1"/>
</dbReference>
<dbReference type="InterPro" id="IPR039808">
    <property type="entry name" value="Cadherin"/>
</dbReference>
<dbReference type="InterPro" id="IPR002126">
    <property type="entry name" value="Cadherin-like_dom"/>
</dbReference>
<dbReference type="InterPro" id="IPR015919">
    <property type="entry name" value="Cadherin-like_sf"/>
</dbReference>
<dbReference type="InterPro" id="IPR020894">
    <property type="entry name" value="Cadherin_CS"/>
</dbReference>
<dbReference type="InterPro" id="IPR000233">
    <property type="entry name" value="Cadherin_Y-type_LIR"/>
</dbReference>
<dbReference type="InterPro" id="IPR027397">
    <property type="entry name" value="Catenin-bd_sf"/>
</dbReference>
<dbReference type="PANTHER" id="PTHR24027">
    <property type="entry name" value="CADHERIN-23"/>
    <property type="match status" value="1"/>
</dbReference>
<dbReference type="PANTHER" id="PTHR24027:SF272">
    <property type="entry name" value="CADHERIN-24"/>
    <property type="match status" value="1"/>
</dbReference>
<dbReference type="Pfam" id="PF01049">
    <property type="entry name" value="CADH_Y-type_LIR"/>
    <property type="match status" value="1"/>
</dbReference>
<dbReference type="Pfam" id="PF00028">
    <property type="entry name" value="Cadherin"/>
    <property type="match status" value="4"/>
</dbReference>
<dbReference type="PRINTS" id="PR00205">
    <property type="entry name" value="CADHERIN"/>
</dbReference>
<dbReference type="SMART" id="SM00112">
    <property type="entry name" value="CA"/>
    <property type="match status" value="4"/>
</dbReference>
<dbReference type="SUPFAM" id="SSF49313">
    <property type="entry name" value="Cadherin-like"/>
    <property type="match status" value="5"/>
</dbReference>
<dbReference type="PROSITE" id="PS00232">
    <property type="entry name" value="CADHERIN_1"/>
    <property type="match status" value="2"/>
</dbReference>
<dbReference type="PROSITE" id="PS50268">
    <property type="entry name" value="CADHERIN_2"/>
    <property type="match status" value="5"/>
</dbReference>
<reference key="1">
    <citation type="journal article" date="2004" name="Genome Res.">
        <title>The status, quality, and expansion of the NIH full-length cDNA project: the Mammalian Gene Collection (MGC).</title>
        <authorList>
            <consortium name="The MGC Project Team"/>
        </authorList>
    </citation>
    <scope>NUCLEOTIDE SEQUENCE [LARGE SCALE MRNA]</scope>
    <source>
        <strain>C57BL/6J</strain>
        <tissue>Brain</tissue>
    </source>
</reference>
<organism>
    <name type="scientific">Mus musculus</name>
    <name type="common">Mouse</name>
    <dbReference type="NCBI Taxonomy" id="10090"/>
    <lineage>
        <taxon>Eukaryota</taxon>
        <taxon>Metazoa</taxon>
        <taxon>Chordata</taxon>
        <taxon>Craniata</taxon>
        <taxon>Vertebrata</taxon>
        <taxon>Euteleostomi</taxon>
        <taxon>Mammalia</taxon>
        <taxon>Eutheria</taxon>
        <taxon>Euarchontoglires</taxon>
        <taxon>Glires</taxon>
        <taxon>Rodentia</taxon>
        <taxon>Myomorpha</taxon>
        <taxon>Muroidea</taxon>
        <taxon>Muridae</taxon>
        <taxon>Murinae</taxon>
        <taxon>Mus</taxon>
        <taxon>Mus</taxon>
    </lineage>
</organism>
<proteinExistence type="evidence at transcript level"/>
<comment type="function">
    <text evidence="1">Cadherins are calcium-dependent cell adhesion proteins. They preferentially interact with themselves in a homophilic manner in connecting cells; cadherins may thus contribute to the sorting of heterogeneous cell types. Cadherin-24 mediate strong cell-cell adhesion (By similarity).</text>
</comment>
<comment type="subunit">
    <text evidence="1">Associates with alpha-, beta- and delta-catenins.</text>
</comment>
<comment type="subcellular location">
    <subcellularLocation>
        <location evidence="5">Cell membrane</location>
        <topology evidence="5">Single-pass type I membrane protein</topology>
    </subcellularLocation>
</comment>
<comment type="domain">
    <text evidence="1">Three calcium ions are usually bound at the interface of each cadherin domain and rigidify the connections, imparting a strong curvature to the full-length ectodomain.</text>
</comment>